<protein>
    <recommendedName>
        <fullName evidence="1">Cation-efflux pump FieF</fullName>
    </recommendedName>
</protein>
<name>FIEF_ECOK1</name>
<comment type="function">
    <text evidence="1">Divalent metal cation transporter which exports Zn(2+), Cd(2+) and possibly Fe(2+). May be involved in zinc and iron detoxification by efflux.</text>
</comment>
<comment type="catalytic activity">
    <reaction evidence="1">
        <text>Zn(2+)(in) + H(+)(out) = Zn(2+)(out) + H(+)(in)</text>
        <dbReference type="Rhea" id="RHEA:28839"/>
        <dbReference type="ChEBI" id="CHEBI:15378"/>
        <dbReference type="ChEBI" id="CHEBI:29105"/>
    </reaction>
</comment>
<comment type="catalytic activity">
    <reaction evidence="1">
        <text>Cd(2+)(in) + H(+)(out) = Cd(2+)(out) + H(+)(in)</text>
        <dbReference type="Rhea" id="RHEA:28739"/>
        <dbReference type="ChEBI" id="CHEBI:15378"/>
        <dbReference type="ChEBI" id="CHEBI:48775"/>
    </reaction>
</comment>
<comment type="catalytic activity">
    <reaction evidence="1">
        <text>Fe(2+)(in) + H(+)(out) = Fe(2+)(out) + H(+)(in)</text>
        <dbReference type="Rhea" id="RHEA:29439"/>
        <dbReference type="ChEBI" id="CHEBI:15378"/>
        <dbReference type="ChEBI" id="CHEBI:29033"/>
    </reaction>
</comment>
<comment type="subunit">
    <text evidence="1">Homodimer.</text>
</comment>
<comment type="subcellular location">
    <subcellularLocation>
        <location evidence="1">Cell inner membrane</location>
        <topology evidence="1">Multi-pass membrane protein</topology>
    </subcellularLocation>
</comment>
<comment type="similarity">
    <text evidence="1">Belongs to the cation diffusion facilitator (CDF) transporter (TC 2.A.4) family. FieF subfamily.</text>
</comment>
<feature type="chain" id="PRO_1000024323" description="Cation-efflux pump FieF">
    <location>
        <begin position="1"/>
        <end position="300"/>
    </location>
</feature>
<feature type="transmembrane region" description="Helical" evidence="1">
    <location>
        <begin position="12"/>
        <end position="32"/>
    </location>
</feature>
<feature type="transmembrane region" description="Helical" evidence="1">
    <location>
        <begin position="39"/>
        <end position="59"/>
    </location>
</feature>
<feature type="transmembrane region" description="Helical" evidence="1">
    <location>
        <begin position="82"/>
        <end position="102"/>
    </location>
</feature>
<feature type="transmembrane region" description="Helical" evidence="1">
    <location>
        <begin position="114"/>
        <end position="134"/>
    </location>
</feature>
<feature type="transmembrane region" description="Helical" evidence="1">
    <location>
        <begin position="156"/>
        <end position="176"/>
    </location>
</feature>
<feature type="transmembrane region" description="Helical" evidence="1">
    <location>
        <begin position="178"/>
        <end position="198"/>
    </location>
</feature>
<feature type="binding site" evidence="1">
    <location>
        <position position="45"/>
    </location>
    <ligand>
        <name>Zn(2+)</name>
        <dbReference type="ChEBI" id="CHEBI:29105"/>
    </ligand>
</feature>
<feature type="binding site" evidence="1">
    <location>
        <position position="49"/>
    </location>
    <ligand>
        <name>Zn(2+)</name>
        <dbReference type="ChEBI" id="CHEBI:29105"/>
    </ligand>
</feature>
<feature type="binding site" evidence="1">
    <location>
        <position position="153"/>
    </location>
    <ligand>
        <name>Zn(2+)</name>
        <dbReference type="ChEBI" id="CHEBI:29105"/>
    </ligand>
</feature>
<feature type="binding site" evidence="1">
    <location>
        <position position="157"/>
    </location>
    <ligand>
        <name>Zn(2+)</name>
        <dbReference type="ChEBI" id="CHEBI:29105"/>
    </ligand>
</feature>
<reference key="1">
    <citation type="journal article" date="2007" name="J. Bacteriol.">
        <title>The genome sequence of avian pathogenic Escherichia coli strain O1:K1:H7 shares strong similarities with human extraintestinal pathogenic E. coli genomes.</title>
        <authorList>
            <person name="Johnson T.J."/>
            <person name="Kariyawasam S."/>
            <person name="Wannemuehler Y."/>
            <person name="Mangiamele P."/>
            <person name="Johnson S.J."/>
            <person name="Doetkott C."/>
            <person name="Skyberg J.A."/>
            <person name="Lynne A.M."/>
            <person name="Johnson J.R."/>
            <person name="Nolan L.K."/>
        </authorList>
    </citation>
    <scope>NUCLEOTIDE SEQUENCE [LARGE SCALE GENOMIC DNA]</scope>
</reference>
<keyword id="KW-0997">Cell inner membrane</keyword>
<keyword id="KW-1003">Cell membrane</keyword>
<keyword id="KW-0406">Ion transport</keyword>
<keyword id="KW-0408">Iron</keyword>
<keyword id="KW-0410">Iron transport</keyword>
<keyword id="KW-0472">Membrane</keyword>
<keyword id="KW-0479">Metal-binding</keyword>
<keyword id="KW-1185">Reference proteome</keyword>
<keyword id="KW-0812">Transmembrane</keyword>
<keyword id="KW-1133">Transmembrane helix</keyword>
<keyword id="KW-0813">Transport</keyword>
<keyword id="KW-0862">Zinc</keyword>
<keyword id="KW-0864">Zinc transport</keyword>
<dbReference type="EMBL" id="CP000468">
    <property type="protein sequence ID" value="ABJ03381.1"/>
    <property type="molecule type" value="Genomic_DNA"/>
</dbReference>
<dbReference type="RefSeq" id="WP_001076748.1">
    <property type="nucleotide sequence ID" value="NZ_CADILS010000014.1"/>
</dbReference>
<dbReference type="SMR" id="A1AI91"/>
<dbReference type="GeneID" id="93777983"/>
<dbReference type="KEGG" id="ecv:APECO1_2554"/>
<dbReference type="HOGENOM" id="CLU_013430_3_0_6"/>
<dbReference type="Proteomes" id="UP000008216">
    <property type="component" value="Chromosome"/>
</dbReference>
<dbReference type="GO" id="GO:0005886">
    <property type="term" value="C:plasma membrane"/>
    <property type="evidence" value="ECO:0007669"/>
    <property type="project" value="UniProtKB-SubCell"/>
</dbReference>
<dbReference type="GO" id="GO:0015086">
    <property type="term" value="F:cadmium ion transmembrane transporter activity"/>
    <property type="evidence" value="ECO:0007669"/>
    <property type="project" value="UniProtKB-UniRule"/>
</dbReference>
<dbReference type="GO" id="GO:0015093">
    <property type="term" value="F:ferrous iron transmembrane transporter activity"/>
    <property type="evidence" value="ECO:0007669"/>
    <property type="project" value="TreeGrafter"/>
</dbReference>
<dbReference type="GO" id="GO:0046872">
    <property type="term" value="F:metal ion binding"/>
    <property type="evidence" value="ECO:0007669"/>
    <property type="project" value="UniProtKB-KW"/>
</dbReference>
<dbReference type="GO" id="GO:0015341">
    <property type="term" value="F:zinc efflux antiporter activity"/>
    <property type="evidence" value="ECO:0007669"/>
    <property type="project" value="TreeGrafter"/>
</dbReference>
<dbReference type="GO" id="GO:0006882">
    <property type="term" value="P:intracellular zinc ion homeostasis"/>
    <property type="evidence" value="ECO:0007669"/>
    <property type="project" value="TreeGrafter"/>
</dbReference>
<dbReference type="FunFam" id="1.20.1510.10:FF:000001">
    <property type="entry name" value="Ferrous-iron efflux pump FieF"/>
    <property type="match status" value="1"/>
</dbReference>
<dbReference type="FunFam" id="3.30.70.1350:FF:000002">
    <property type="entry name" value="Ferrous-iron efflux pump FieF"/>
    <property type="match status" value="1"/>
</dbReference>
<dbReference type="Gene3D" id="1.20.1510.10">
    <property type="entry name" value="Cation efflux protein transmembrane domain"/>
    <property type="match status" value="1"/>
</dbReference>
<dbReference type="Gene3D" id="3.30.70.1350">
    <property type="entry name" value="Cation efflux protein, cytoplasmic domain"/>
    <property type="match status" value="1"/>
</dbReference>
<dbReference type="HAMAP" id="MF_01425">
    <property type="entry name" value="Cation_efflux_FieF"/>
    <property type="match status" value="1"/>
</dbReference>
<dbReference type="InterPro" id="IPR002524">
    <property type="entry name" value="Cation_efflux"/>
</dbReference>
<dbReference type="InterPro" id="IPR027470">
    <property type="entry name" value="Cation_efflux_CTD"/>
</dbReference>
<dbReference type="InterPro" id="IPR036837">
    <property type="entry name" value="Cation_efflux_CTD_sf"/>
</dbReference>
<dbReference type="InterPro" id="IPR023783">
    <property type="entry name" value="Cation_efflux_FieF"/>
</dbReference>
<dbReference type="InterPro" id="IPR027469">
    <property type="entry name" value="Cation_efflux_TMD_sf"/>
</dbReference>
<dbReference type="InterPro" id="IPR050291">
    <property type="entry name" value="CDF_Transporter"/>
</dbReference>
<dbReference type="NCBIfam" id="TIGR01297">
    <property type="entry name" value="CDF"/>
    <property type="match status" value="1"/>
</dbReference>
<dbReference type="NCBIfam" id="NF007064">
    <property type="entry name" value="PRK09509.1"/>
    <property type="match status" value="1"/>
</dbReference>
<dbReference type="PANTHER" id="PTHR43840:SF41">
    <property type="entry name" value="CATION-EFFLUX PUMP FIEF"/>
    <property type="match status" value="1"/>
</dbReference>
<dbReference type="PANTHER" id="PTHR43840">
    <property type="entry name" value="MITOCHONDRIAL METAL TRANSPORTER 1-RELATED"/>
    <property type="match status" value="1"/>
</dbReference>
<dbReference type="Pfam" id="PF01545">
    <property type="entry name" value="Cation_efflux"/>
    <property type="match status" value="1"/>
</dbReference>
<dbReference type="Pfam" id="PF16916">
    <property type="entry name" value="ZT_dimer"/>
    <property type="match status" value="1"/>
</dbReference>
<dbReference type="SUPFAM" id="SSF160240">
    <property type="entry name" value="Cation efflux protein cytoplasmic domain-like"/>
    <property type="match status" value="1"/>
</dbReference>
<dbReference type="SUPFAM" id="SSF161111">
    <property type="entry name" value="Cation efflux protein transmembrane domain-like"/>
    <property type="match status" value="1"/>
</dbReference>
<evidence type="ECO:0000255" key="1">
    <source>
        <dbReference type="HAMAP-Rule" id="MF_01425"/>
    </source>
</evidence>
<sequence>MNQSYGRLVSRAAIAATAMASLLLLIKIFAWWYTGSVSILAALVDSLVDIGASLTNLLVVRYSLQPADDNHSFGHGKAESLAALAQSMFISGSALFLFLTGIQHLVSPTPMTDPGVGVIVTIVALICTIILVSFQRWVVRRTQSQAVRADMLHYQSDVMMNGAILLALGLSWYGWHRADALFALGIGIYILYSALRMGYEAVQSLLDRALPDEERQEIIDIVTSWPGVSGAHDLRTRQSGPTRFIQIHLEMEDSLPLVQAHMVADQVEQAILRRFPGSDVIIHQDPCSVVPREGKRSMLS</sequence>
<gene>
    <name evidence="1" type="primary">fieF</name>
    <name type="ordered locus">Ecok1_38870</name>
    <name type="ORF">APECO1_2554</name>
</gene>
<proteinExistence type="inferred from homology"/>
<accession>A1AI91</accession>
<organism>
    <name type="scientific">Escherichia coli O1:K1 / APEC</name>
    <dbReference type="NCBI Taxonomy" id="405955"/>
    <lineage>
        <taxon>Bacteria</taxon>
        <taxon>Pseudomonadati</taxon>
        <taxon>Pseudomonadota</taxon>
        <taxon>Gammaproteobacteria</taxon>
        <taxon>Enterobacterales</taxon>
        <taxon>Enterobacteriaceae</taxon>
        <taxon>Escherichia</taxon>
    </lineage>
</organism>